<accession>Q32BR1</accession>
<gene>
    <name evidence="1" type="primary">glnE</name>
    <name type="ordered locus">SDY_3236</name>
</gene>
<sequence length="946" mass="108516">MKPLSSPLQQYWQTVVERLPEPLAEESLSAQAKLVLTFSDFVQDSVIAHPEWLMELESQPPQADEWQHYAAWLQEALSNVSDEAGLMRELRLFRRRIMVRIAWAQTLALVTEESILQQLSYLAETLIVAARDWLYDACCREWGTPCNAQGEAQPLLILGMGKLGGGELNFSSDIDLIFAWPEHGCTQGGRRELDNAQFFTRMGQRLIKVLDQPTQDGFVYRVDMRLRPFGESGPLVLSFAALEDYYQEQGRDWERYAMVKARIMGDSEGVYANELRAMLRPFVFRRYIDFSVIQSLRNMKGMIAREVRRRGLTDNIKLGAGGIREIEFIVQVFQLIRGGREPSLQSRSLLPTLSVIAALHLFSENDAKQLRVAYLFLRRLENLLQSINDEQTQTLPSDELNRARLAWAMDFADWPQLTGVLTAHMTNVRRVFNELIGDDESETQEESLSEQWRELWQDALQEDDTTPVLAHLSEDDRKQVLTLIADFRKELDKRTIGPRGRQVLDHLMPHLLSDVCAREDAAVTLSRITALLVGIVTRTTYLELLSEFPAALKHLISLCAASPMIASQLARYPLLLDELLDPNTLYQPTATDAYRDELRQYLLRVPEDDEEQQLEALRQFKQAQLLRIAAADIAGTLPVMKVSDHLTWLAEAMIDAVVQQAWVQMVARYGKPNHLNEREGRGFAVVGYGKLGGWELGYSSDLDLIFLHDCPMDAMTDGEREIDVRQFYLRLAQRIMHLFSTRTSSGILYEVDARLRPSGAAGMLVTSAEAFADYQKNEAWTWEHQALVRARVVYGDPQLTAHFDAVRREIMALPREGKTLQTEVREMREKMRAHLGNKHRDRFDIKADEGGITDIEFITQYLVLRYAHEKPKLTRWSDNVRILELLAQNDIMEEQEAMVLTRAYTTLRDELHHLALQELPGHVSEDCFTAERDLVRASWQKWLVEE</sequence>
<comment type="function">
    <text evidence="1">Involved in the regulation of glutamine synthetase GlnA, a key enzyme in the process to assimilate ammonia. When cellular nitrogen levels are high, the C-terminal adenylyl transferase (AT) inactivates GlnA by covalent transfer of an adenylyl group from ATP to specific tyrosine residue of GlnA, thus reducing its activity. Conversely, when nitrogen levels are low, the N-terminal adenylyl removase (AR) activates GlnA by removing the adenylyl group by phosphorolysis, increasing its activity. The regulatory region of GlnE binds the signal transduction protein PII (GlnB) which indicates the nitrogen status of the cell.</text>
</comment>
<comment type="catalytic activity">
    <reaction evidence="1">
        <text>[glutamine synthetase]-O(4)-(5'-adenylyl)-L-tyrosine + phosphate = [glutamine synthetase]-L-tyrosine + ADP</text>
        <dbReference type="Rhea" id="RHEA:43716"/>
        <dbReference type="Rhea" id="RHEA-COMP:10660"/>
        <dbReference type="Rhea" id="RHEA-COMP:10661"/>
        <dbReference type="ChEBI" id="CHEBI:43474"/>
        <dbReference type="ChEBI" id="CHEBI:46858"/>
        <dbReference type="ChEBI" id="CHEBI:83624"/>
        <dbReference type="ChEBI" id="CHEBI:456216"/>
        <dbReference type="EC" id="2.7.7.89"/>
    </reaction>
</comment>
<comment type="catalytic activity">
    <reaction evidence="1">
        <text>[glutamine synthetase]-L-tyrosine + ATP = [glutamine synthetase]-O(4)-(5'-adenylyl)-L-tyrosine + diphosphate</text>
        <dbReference type="Rhea" id="RHEA:18589"/>
        <dbReference type="Rhea" id="RHEA-COMP:10660"/>
        <dbReference type="Rhea" id="RHEA-COMP:10661"/>
        <dbReference type="ChEBI" id="CHEBI:30616"/>
        <dbReference type="ChEBI" id="CHEBI:33019"/>
        <dbReference type="ChEBI" id="CHEBI:46858"/>
        <dbReference type="ChEBI" id="CHEBI:83624"/>
        <dbReference type="EC" id="2.7.7.42"/>
    </reaction>
</comment>
<comment type="cofactor">
    <cofactor evidence="1">
        <name>Mg(2+)</name>
        <dbReference type="ChEBI" id="CHEBI:18420"/>
    </cofactor>
</comment>
<comment type="similarity">
    <text evidence="1">Belongs to the GlnE family.</text>
</comment>
<evidence type="ECO:0000255" key="1">
    <source>
        <dbReference type="HAMAP-Rule" id="MF_00802"/>
    </source>
</evidence>
<feature type="chain" id="PRO_1000047016" description="Bifunctional glutamine synthetase adenylyltransferase/adenylyl-removing enzyme">
    <location>
        <begin position="1"/>
        <end position="946"/>
    </location>
</feature>
<feature type="region of interest" description="Adenylyl removase" evidence="1">
    <location>
        <begin position="1"/>
        <end position="440"/>
    </location>
</feature>
<feature type="region of interest" description="Adenylyl transferase" evidence="1">
    <location>
        <begin position="449"/>
        <end position="946"/>
    </location>
</feature>
<keyword id="KW-0067">ATP-binding</keyword>
<keyword id="KW-0460">Magnesium</keyword>
<keyword id="KW-0511">Multifunctional enzyme</keyword>
<keyword id="KW-0547">Nucleotide-binding</keyword>
<keyword id="KW-0548">Nucleotidyltransferase</keyword>
<keyword id="KW-1185">Reference proteome</keyword>
<keyword id="KW-0808">Transferase</keyword>
<protein>
    <recommendedName>
        <fullName evidence="1">Bifunctional glutamine synthetase adenylyltransferase/adenylyl-removing enzyme</fullName>
    </recommendedName>
    <alternativeName>
        <fullName evidence="1">ATP:glutamine synthetase adenylyltransferase</fullName>
    </alternativeName>
    <alternativeName>
        <fullName evidence="1">ATase</fullName>
    </alternativeName>
    <domain>
        <recommendedName>
            <fullName evidence="1">Glutamine synthetase adenylyl-L-tyrosine phosphorylase</fullName>
            <ecNumber evidence="1">2.7.7.89</ecNumber>
        </recommendedName>
        <alternativeName>
            <fullName evidence="1">Adenylyl removase</fullName>
            <shortName evidence="1">AR</shortName>
            <shortName evidence="1">AT-N</shortName>
        </alternativeName>
    </domain>
    <domain>
        <recommendedName>
            <fullName evidence="1">Glutamine synthetase adenylyl transferase</fullName>
            <ecNumber evidence="1">2.7.7.42</ecNumber>
        </recommendedName>
        <alternativeName>
            <fullName evidence="1">Adenylyl transferase</fullName>
            <shortName evidence="1">AT</shortName>
            <shortName evidence="1">AT-C</shortName>
        </alternativeName>
    </domain>
</protein>
<reference key="1">
    <citation type="journal article" date="2005" name="Nucleic Acids Res.">
        <title>Genome dynamics and diversity of Shigella species, the etiologic agents of bacillary dysentery.</title>
        <authorList>
            <person name="Yang F."/>
            <person name="Yang J."/>
            <person name="Zhang X."/>
            <person name="Chen L."/>
            <person name="Jiang Y."/>
            <person name="Yan Y."/>
            <person name="Tang X."/>
            <person name="Wang J."/>
            <person name="Xiong Z."/>
            <person name="Dong J."/>
            <person name="Xue Y."/>
            <person name="Zhu Y."/>
            <person name="Xu X."/>
            <person name="Sun L."/>
            <person name="Chen S."/>
            <person name="Nie H."/>
            <person name="Peng J."/>
            <person name="Xu J."/>
            <person name="Wang Y."/>
            <person name="Yuan Z."/>
            <person name="Wen Y."/>
            <person name="Yao Z."/>
            <person name="Shen Y."/>
            <person name="Qiang B."/>
            <person name="Hou Y."/>
            <person name="Yu J."/>
            <person name="Jin Q."/>
        </authorList>
    </citation>
    <scope>NUCLEOTIDE SEQUENCE [LARGE SCALE GENOMIC DNA]</scope>
    <source>
        <strain>Sd197</strain>
    </source>
</reference>
<organism>
    <name type="scientific">Shigella dysenteriae serotype 1 (strain Sd197)</name>
    <dbReference type="NCBI Taxonomy" id="300267"/>
    <lineage>
        <taxon>Bacteria</taxon>
        <taxon>Pseudomonadati</taxon>
        <taxon>Pseudomonadota</taxon>
        <taxon>Gammaproteobacteria</taxon>
        <taxon>Enterobacterales</taxon>
        <taxon>Enterobacteriaceae</taxon>
        <taxon>Shigella</taxon>
    </lineage>
</organism>
<proteinExistence type="inferred from homology"/>
<dbReference type="EC" id="2.7.7.89" evidence="1"/>
<dbReference type="EC" id="2.7.7.42" evidence="1"/>
<dbReference type="EMBL" id="CP000034">
    <property type="protein sequence ID" value="ABB63244.1"/>
    <property type="molecule type" value="Genomic_DNA"/>
</dbReference>
<dbReference type="RefSeq" id="WP_011378869.1">
    <property type="nucleotide sequence ID" value="NC_007606.1"/>
</dbReference>
<dbReference type="RefSeq" id="YP_404735.1">
    <property type="nucleotide sequence ID" value="NC_007606.1"/>
</dbReference>
<dbReference type="SMR" id="Q32BR1"/>
<dbReference type="STRING" id="300267.SDY_3236"/>
<dbReference type="EnsemblBacteria" id="ABB63244">
    <property type="protein sequence ID" value="ABB63244"/>
    <property type="gene ID" value="SDY_3236"/>
</dbReference>
<dbReference type="KEGG" id="sdy:SDY_3236"/>
<dbReference type="PATRIC" id="fig|300267.13.peg.3865"/>
<dbReference type="HOGENOM" id="CLU_006233_0_1_6"/>
<dbReference type="Proteomes" id="UP000002716">
    <property type="component" value="Chromosome"/>
</dbReference>
<dbReference type="GO" id="GO:0005829">
    <property type="term" value="C:cytosol"/>
    <property type="evidence" value="ECO:0007669"/>
    <property type="project" value="TreeGrafter"/>
</dbReference>
<dbReference type="GO" id="GO:0008882">
    <property type="term" value="F:[glutamate-ammonia-ligase] adenylyltransferase activity"/>
    <property type="evidence" value="ECO:0007669"/>
    <property type="project" value="UniProtKB-UniRule"/>
</dbReference>
<dbReference type="GO" id="GO:0047388">
    <property type="term" value="F:[glutamine synthetase]-adenylyl-L-tyrosine phosphorylase activity"/>
    <property type="evidence" value="ECO:0007669"/>
    <property type="project" value="UniProtKB-EC"/>
</dbReference>
<dbReference type="GO" id="GO:0005524">
    <property type="term" value="F:ATP binding"/>
    <property type="evidence" value="ECO:0007669"/>
    <property type="project" value="UniProtKB-UniRule"/>
</dbReference>
<dbReference type="GO" id="GO:0000287">
    <property type="term" value="F:magnesium ion binding"/>
    <property type="evidence" value="ECO:0007669"/>
    <property type="project" value="UniProtKB-UniRule"/>
</dbReference>
<dbReference type="GO" id="GO:0000820">
    <property type="term" value="P:regulation of glutamine family amino acid metabolic process"/>
    <property type="evidence" value="ECO:0007669"/>
    <property type="project" value="UniProtKB-UniRule"/>
</dbReference>
<dbReference type="CDD" id="cd05401">
    <property type="entry name" value="NT_GlnE_GlnD_like"/>
    <property type="match status" value="2"/>
</dbReference>
<dbReference type="FunFam" id="1.10.4050.10:FF:000001">
    <property type="entry name" value="Bifunctional glutamine synthetase adenylyltransferase/adenylyl-removing enzyme"/>
    <property type="match status" value="1"/>
</dbReference>
<dbReference type="FunFam" id="1.20.120.1510:FF:000001">
    <property type="entry name" value="Bifunctional glutamine synthetase adenylyltransferase/adenylyl-removing enzyme"/>
    <property type="match status" value="1"/>
</dbReference>
<dbReference type="FunFam" id="1.20.120.330:FF:000005">
    <property type="entry name" value="Bifunctional glutamine synthetase adenylyltransferase/adenylyl-removing enzyme"/>
    <property type="match status" value="1"/>
</dbReference>
<dbReference type="FunFam" id="1.20.120.330:FF:000008">
    <property type="entry name" value="Bifunctional glutamine synthetase adenylyltransferase/adenylyl-removing enzyme"/>
    <property type="match status" value="1"/>
</dbReference>
<dbReference type="FunFam" id="3.30.460.10:FF:000009">
    <property type="entry name" value="Bifunctional glutamine synthetase adenylyltransferase/adenylyl-removing enzyme"/>
    <property type="match status" value="1"/>
</dbReference>
<dbReference type="FunFam" id="3.30.460.10:FF:000014">
    <property type="entry name" value="Bifunctional glutamine synthetase adenylyltransferase/adenylyl-removing enzyme"/>
    <property type="match status" value="1"/>
</dbReference>
<dbReference type="Gene3D" id="1.20.120.1510">
    <property type="match status" value="1"/>
</dbReference>
<dbReference type="Gene3D" id="3.30.460.10">
    <property type="entry name" value="Beta Polymerase, domain 2"/>
    <property type="match status" value="2"/>
</dbReference>
<dbReference type="Gene3D" id="1.10.4050.10">
    <property type="entry name" value="Glutamine synthase adenylyltransferase GlnE"/>
    <property type="match status" value="1"/>
</dbReference>
<dbReference type="Gene3D" id="1.20.120.330">
    <property type="entry name" value="Nucleotidyltransferases domain 2"/>
    <property type="match status" value="2"/>
</dbReference>
<dbReference type="HAMAP" id="MF_00802">
    <property type="entry name" value="GlnE"/>
    <property type="match status" value="1"/>
</dbReference>
<dbReference type="InterPro" id="IPR023057">
    <property type="entry name" value="GlnE"/>
</dbReference>
<dbReference type="InterPro" id="IPR005190">
    <property type="entry name" value="GlnE_rpt_dom"/>
</dbReference>
<dbReference type="InterPro" id="IPR043519">
    <property type="entry name" value="NT_sf"/>
</dbReference>
<dbReference type="InterPro" id="IPR013546">
    <property type="entry name" value="PII_UdlTrfase/GS_AdlTrfase"/>
</dbReference>
<dbReference type="NCBIfam" id="NF008292">
    <property type="entry name" value="PRK11072.1"/>
    <property type="match status" value="1"/>
</dbReference>
<dbReference type="PANTHER" id="PTHR30621:SF0">
    <property type="entry name" value="BIFUNCTIONAL GLUTAMINE SYNTHETASE ADENYLYLTRANSFERASE_ADENYLYL-REMOVING ENZYME"/>
    <property type="match status" value="1"/>
</dbReference>
<dbReference type="PANTHER" id="PTHR30621">
    <property type="entry name" value="GLUTAMINE SYNTHETASE ADENYLYLTRANSFERASE"/>
    <property type="match status" value="1"/>
</dbReference>
<dbReference type="Pfam" id="PF08335">
    <property type="entry name" value="GlnD_UR_UTase"/>
    <property type="match status" value="2"/>
</dbReference>
<dbReference type="Pfam" id="PF03710">
    <property type="entry name" value="GlnE"/>
    <property type="match status" value="2"/>
</dbReference>
<dbReference type="SUPFAM" id="SSF81301">
    <property type="entry name" value="Nucleotidyltransferase"/>
    <property type="match status" value="2"/>
</dbReference>
<dbReference type="SUPFAM" id="SSF81593">
    <property type="entry name" value="Nucleotidyltransferase substrate binding subunit/domain"/>
    <property type="match status" value="2"/>
</dbReference>
<name>GLNE_SHIDS</name>